<protein>
    <recommendedName>
        <fullName>Formyltetrahydrofolate deformylase 2, mitochondrial</fullName>
        <ecNumber>3.5.1.10</ecNumber>
    </recommendedName>
</protein>
<sequence>MIRRVSTTSCLSATAFRSFTKWSFKSSQFHGESLDSSVSPLLIPGFHVFHCPDVVGIVAKLSDCIAAKGGNILGYDVFVPENKNVFYSRSEFIFDPVKWPRRQMDEDFQTIAQKFSALSSVVRVPSLDPKYKIALLLSKQDHCLVEMLHKWQDGKLPVDITCVISNHERAPNTHVMRFLQRHGISYHYLPTTDQNKIEEEILELVKGTDFLVLARYMQLLSGNFLKGYGKDVINIHHGLLPSFKGRNPVKQAFDAGVKLIGATTHFVTEELDSGPIIEQMVERVSHRDNLRSFVQKSEDLEKKCLMKAIKSYCELRVLPYGTQRTVVF</sequence>
<evidence type="ECO:0000250" key="1"/>
<evidence type="ECO:0000255" key="2"/>
<evidence type="ECO:0000255" key="3">
    <source>
        <dbReference type="PROSITE-ProRule" id="PRU01007"/>
    </source>
</evidence>
<evidence type="ECO:0000269" key="4">
    <source>
    </source>
</evidence>
<evidence type="ECO:0000305" key="5"/>
<proteinExistence type="evidence at protein level"/>
<organism>
    <name type="scientific">Arabidopsis thaliana</name>
    <name type="common">Mouse-ear cress</name>
    <dbReference type="NCBI Taxonomy" id="3702"/>
    <lineage>
        <taxon>Eukaryota</taxon>
        <taxon>Viridiplantae</taxon>
        <taxon>Streptophyta</taxon>
        <taxon>Embryophyta</taxon>
        <taxon>Tracheophyta</taxon>
        <taxon>Spermatophyta</taxon>
        <taxon>Magnoliopsida</taxon>
        <taxon>eudicotyledons</taxon>
        <taxon>Gunneridae</taxon>
        <taxon>Pentapetalae</taxon>
        <taxon>rosids</taxon>
        <taxon>malvids</taxon>
        <taxon>Brassicales</taxon>
        <taxon>Brassicaceae</taxon>
        <taxon>Camelineae</taxon>
        <taxon>Arabidopsis</taxon>
    </lineage>
</organism>
<accession>F4JP46</accession>
<accession>O23579</accession>
<comment type="function">
    <text evidence="4">Deformylase involved in photorespiration. Prevents excessive accumulation of 5-formyl tetrahydrofolate (THF), a potent inhibitor of the Gly decarboxylase/Ser hydroxymethyltransferase complex.</text>
</comment>
<comment type="catalytic activity">
    <reaction evidence="4">
        <text>(6R)-10-formyltetrahydrofolate + H2O = (6S)-5,6,7,8-tetrahydrofolate + formate + H(+)</text>
        <dbReference type="Rhea" id="RHEA:19833"/>
        <dbReference type="ChEBI" id="CHEBI:15377"/>
        <dbReference type="ChEBI" id="CHEBI:15378"/>
        <dbReference type="ChEBI" id="CHEBI:15740"/>
        <dbReference type="ChEBI" id="CHEBI:57453"/>
        <dbReference type="ChEBI" id="CHEBI:195366"/>
        <dbReference type="EC" id="3.5.1.10"/>
    </reaction>
</comment>
<comment type="subcellular location">
    <subcellularLocation>
        <location evidence="4">Mitochondrion</location>
    </subcellularLocation>
</comment>
<comment type="tissue specificity">
    <text evidence="4">Expressed in leaves, cotyledons, roots, seeds and flowers.</text>
</comment>
<comment type="disruption phenotype">
    <text evidence="4">No visible phenotype. Puru1 and puru2 double mutant shows a 70-fold increase in Gly levels and accumulates elevated levels of 5- and 10-formyl THF. Embryo development arrests between heart and early bent cotyledon stages, and mature seeds are shriveled, accumulate low amounts of lipids, and fail to germinate. Puru1 and puru2 double mutant is only conditionally lethal and is rescued by growth under nonphotorespiratory conditions. Puru1, puru2 and fold1 triple mutant shows no photorespiratory phenotype.</text>
</comment>
<comment type="similarity">
    <text evidence="5">Belongs to the PurU family.</text>
</comment>
<comment type="sequence caution" evidence="5">
    <conflict type="erroneous gene model prediction">
        <sequence resource="EMBL-CDS" id="CAB10517"/>
    </conflict>
</comment>
<comment type="sequence caution" evidence="5">
    <conflict type="erroneous gene model prediction">
        <sequence resource="EMBL-CDS" id="CAB78739"/>
    </conflict>
</comment>
<keyword id="KW-0378">Hydrolase</keyword>
<keyword id="KW-0496">Mitochondrion</keyword>
<keyword id="KW-0554">One-carbon metabolism</keyword>
<keyword id="KW-0601">Photorespiration</keyword>
<keyword id="KW-1185">Reference proteome</keyword>
<keyword id="KW-0808">Transferase</keyword>
<keyword id="KW-0809">Transit peptide</keyword>
<name>PURU2_ARATH</name>
<gene>
    <name type="primary">PURU2</name>
    <name type="ordered locus">At4g17360</name>
    <name type="ORF">dl4715c</name>
    <name type="ORF">FCAALL.417</name>
</gene>
<dbReference type="EC" id="3.5.1.10"/>
<dbReference type="EMBL" id="Z97343">
    <property type="protein sequence ID" value="CAB10517.1"/>
    <property type="status" value="ALT_SEQ"/>
    <property type="molecule type" value="Genomic_DNA"/>
</dbReference>
<dbReference type="EMBL" id="AL161546">
    <property type="protein sequence ID" value="CAB78739.1"/>
    <property type="status" value="ALT_SEQ"/>
    <property type="molecule type" value="Genomic_DNA"/>
</dbReference>
<dbReference type="EMBL" id="CP002687">
    <property type="protein sequence ID" value="AEE83880.1"/>
    <property type="molecule type" value="Genomic_DNA"/>
</dbReference>
<dbReference type="PIR" id="H71442">
    <property type="entry name" value="H71442"/>
</dbReference>
<dbReference type="RefSeq" id="NP_193467.2">
    <property type="nucleotide sequence ID" value="NM_117840.5"/>
</dbReference>
<dbReference type="SMR" id="F4JP46"/>
<dbReference type="FunCoup" id="F4JP46">
    <property type="interactions" value="110"/>
</dbReference>
<dbReference type="STRING" id="3702.F4JP46"/>
<dbReference type="PaxDb" id="3702-AT4G17360.1"/>
<dbReference type="ProteomicsDB" id="226462"/>
<dbReference type="EnsemblPlants" id="AT4G17360.1">
    <property type="protein sequence ID" value="AT4G17360.1"/>
    <property type="gene ID" value="AT4G17360"/>
</dbReference>
<dbReference type="GeneID" id="827448"/>
<dbReference type="Gramene" id="AT4G17360.1">
    <property type="protein sequence ID" value="AT4G17360.1"/>
    <property type="gene ID" value="AT4G17360"/>
</dbReference>
<dbReference type="KEGG" id="ath:AT4G17360"/>
<dbReference type="Araport" id="AT4G17360"/>
<dbReference type="TAIR" id="AT4G17360"/>
<dbReference type="eggNOG" id="KOG3076">
    <property type="taxonomic scope" value="Eukaryota"/>
</dbReference>
<dbReference type="HOGENOM" id="CLU_038395_3_0_1"/>
<dbReference type="InParanoid" id="F4JP46"/>
<dbReference type="OrthoDB" id="4239773at2759"/>
<dbReference type="PRO" id="PR:F4JP46"/>
<dbReference type="Proteomes" id="UP000006548">
    <property type="component" value="Chromosome 4"/>
</dbReference>
<dbReference type="ExpressionAtlas" id="F4JP46">
    <property type="expression patterns" value="baseline and differential"/>
</dbReference>
<dbReference type="GO" id="GO:0005739">
    <property type="term" value="C:mitochondrion"/>
    <property type="evidence" value="ECO:0000314"/>
    <property type="project" value="TAIR"/>
</dbReference>
<dbReference type="GO" id="GO:0008864">
    <property type="term" value="F:formyltetrahydrofolate deformylase activity"/>
    <property type="evidence" value="ECO:0007669"/>
    <property type="project" value="UniProtKB-EC"/>
</dbReference>
<dbReference type="GO" id="GO:0016740">
    <property type="term" value="F:transferase activity"/>
    <property type="evidence" value="ECO:0007669"/>
    <property type="project" value="UniProtKB-KW"/>
</dbReference>
<dbReference type="GO" id="GO:0006189">
    <property type="term" value="P:'de novo' IMP biosynthetic process"/>
    <property type="evidence" value="ECO:0007669"/>
    <property type="project" value="InterPro"/>
</dbReference>
<dbReference type="GO" id="GO:0006730">
    <property type="term" value="P:one-carbon metabolic process"/>
    <property type="evidence" value="ECO:0007669"/>
    <property type="project" value="UniProtKB-KW"/>
</dbReference>
<dbReference type="GO" id="GO:0009853">
    <property type="term" value="P:photorespiration"/>
    <property type="evidence" value="ECO:0000315"/>
    <property type="project" value="TAIR"/>
</dbReference>
<dbReference type="GO" id="GO:0046653">
    <property type="term" value="P:tetrahydrofolate metabolic process"/>
    <property type="evidence" value="ECO:0000315"/>
    <property type="project" value="TAIR"/>
</dbReference>
<dbReference type="CDD" id="cd04875">
    <property type="entry name" value="ACT_F4HF-DF"/>
    <property type="match status" value="1"/>
</dbReference>
<dbReference type="CDD" id="cd08648">
    <property type="entry name" value="FMT_core_Formyl-FH4-Hydrolase_C"/>
    <property type="match status" value="1"/>
</dbReference>
<dbReference type="FunFam" id="3.40.50.170:FF:000016">
    <property type="entry name" value="Formyltetrahydrofolate deformylase 1, mitochondrial"/>
    <property type="match status" value="1"/>
</dbReference>
<dbReference type="FunFam" id="3.30.70.260:FF:000098">
    <property type="entry name" value="Formyltetrahydrofolate deformylase 2, mitochondrial"/>
    <property type="match status" value="1"/>
</dbReference>
<dbReference type="Gene3D" id="3.30.70.260">
    <property type="match status" value="1"/>
</dbReference>
<dbReference type="Gene3D" id="3.40.50.170">
    <property type="entry name" value="Formyl transferase, N-terminal domain"/>
    <property type="match status" value="1"/>
</dbReference>
<dbReference type="InterPro" id="IPR045865">
    <property type="entry name" value="ACT-like_dom_sf"/>
</dbReference>
<dbReference type="InterPro" id="IPR002912">
    <property type="entry name" value="ACT_dom"/>
</dbReference>
<dbReference type="InterPro" id="IPR041729">
    <property type="entry name" value="Formyl-FH4-Hydrolase_C"/>
</dbReference>
<dbReference type="InterPro" id="IPR002376">
    <property type="entry name" value="Formyl_transf_N"/>
</dbReference>
<dbReference type="InterPro" id="IPR036477">
    <property type="entry name" value="Formyl_transf_N_sf"/>
</dbReference>
<dbReference type="InterPro" id="IPR001555">
    <property type="entry name" value="GART_AS"/>
</dbReference>
<dbReference type="InterPro" id="IPR004810">
    <property type="entry name" value="PurU"/>
</dbReference>
<dbReference type="InterPro" id="IPR044074">
    <property type="entry name" value="PurU_ACT"/>
</dbReference>
<dbReference type="NCBIfam" id="NF004684">
    <property type="entry name" value="PRK06027.1"/>
    <property type="match status" value="1"/>
</dbReference>
<dbReference type="PANTHER" id="PTHR42706">
    <property type="entry name" value="FORMYLTETRAHYDROFOLATE DEFORMYLASE"/>
    <property type="match status" value="1"/>
</dbReference>
<dbReference type="PANTHER" id="PTHR42706:SF1">
    <property type="entry name" value="FORMYLTETRAHYDROFOLATE DEFORMYLASE 2, MITOCHONDRIAL"/>
    <property type="match status" value="1"/>
</dbReference>
<dbReference type="Pfam" id="PF00551">
    <property type="entry name" value="Formyl_trans_N"/>
    <property type="match status" value="1"/>
</dbReference>
<dbReference type="PIRSF" id="PIRSF036480">
    <property type="entry name" value="FormyFH4_hydr"/>
    <property type="match status" value="1"/>
</dbReference>
<dbReference type="PRINTS" id="PR01575">
    <property type="entry name" value="FFH4HYDRLASE"/>
</dbReference>
<dbReference type="SUPFAM" id="SSF55021">
    <property type="entry name" value="ACT-like"/>
    <property type="match status" value="1"/>
</dbReference>
<dbReference type="SUPFAM" id="SSF53328">
    <property type="entry name" value="Formyltransferase"/>
    <property type="match status" value="1"/>
</dbReference>
<dbReference type="PROSITE" id="PS51671">
    <property type="entry name" value="ACT"/>
    <property type="match status" value="1"/>
</dbReference>
<dbReference type="PROSITE" id="PS00373">
    <property type="entry name" value="GART"/>
    <property type="match status" value="1"/>
</dbReference>
<reference key="1">
    <citation type="journal article" date="1998" name="Nature">
        <title>Analysis of 1.9 Mb of contiguous sequence from chromosome 4 of Arabidopsis thaliana.</title>
        <authorList>
            <person name="Bevan M."/>
            <person name="Bancroft I."/>
            <person name="Bent E."/>
            <person name="Love K."/>
            <person name="Goodman H.M."/>
            <person name="Dean C."/>
            <person name="Bergkamp R."/>
            <person name="Dirkse W."/>
            <person name="van Staveren M."/>
            <person name="Stiekema W."/>
            <person name="Drost L."/>
            <person name="Ridley P."/>
            <person name="Hudson S.-A."/>
            <person name="Patel K."/>
            <person name="Murphy G."/>
            <person name="Piffanelli P."/>
            <person name="Wedler H."/>
            <person name="Wedler E."/>
            <person name="Wambutt R."/>
            <person name="Weitzenegger T."/>
            <person name="Pohl T."/>
            <person name="Terryn N."/>
            <person name="Gielen J."/>
            <person name="Villarroel R."/>
            <person name="De Clercq R."/>
            <person name="van Montagu M."/>
            <person name="Lecharny A."/>
            <person name="Aubourg S."/>
            <person name="Gy I."/>
            <person name="Kreis M."/>
            <person name="Lao N."/>
            <person name="Kavanagh T."/>
            <person name="Hempel S."/>
            <person name="Kotter P."/>
            <person name="Entian K.-D."/>
            <person name="Rieger M."/>
            <person name="Schaefer M."/>
            <person name="Funk B."/>
            <person name="Mueller-Auer S."/>
            <person name="Silvey M."/>
            <person name="James R."/>
            <person name="Monfort A."/>
            <person name="Pons A."/>
            <person name="Puigdomenech P."/>
            <person name="Douka A."/>
            <person name="Voukelatou E."/>
            <person name="Milioni D."/>
            <person name="Hatzopoulos P."/>
            <person name="Piravandi E."/>
            <person name="Obermaier B."/>
            <person name="Hilbert H."/>
            <person name="Duesterhoeft A."/>
            <person name="Moores T."/>
            <person name="Jones J.D.G."/>
            <person name="Eneva T."/>
            <person name="Palme K."/>
            <person name="Benes V."/>
            <person name="Rechmann S."/>
            <person name="Ansorge W."/>
            <person name="Cooke R."/>
            <person name="Berger C."/>
            <person name="Delseny M."/>
            <person name="Voet M."/>
            <person name="Volckaert G."/>
            <person name="Mewes H.-W."/>
            <person name="Klosterman S."/>
            <person name="Schueller C."/>
            <person name="Chalwatzis N."/>
        </authorList>
    </citation>
    <scope>NUCLEOTIDE SEQUENCE [LARGE SCALE GENOMIC DNA]</scope>
    <source>
        <strain>cv. Columbia</strain>
    </source>
</reference>
<reference key="2">
    <citation type="journal article" date="1999" name="Nature">
        <title>Sequence and analysis of chromosome 4 of the plant Arabidopsis thaliana.</title>
        <authorList>
            <person name="Mayer K.F.X."/>
            <person name="Schueller C."/>
            <person name="Wambutt R."/>
            <person name="Murphy G."/>
            <person name="Volckaert G."/>
            <person name="Pohl T."/>
            <person name="Duesterhoeft A."/>
            <person name="Stiekema W."/>
            <person name="Entian K.-D."/>
            <person name="Terryn N."/>
            <person name="Harris B."/>
            <person name="Ansorge W."/>
            <person name="Brandt P."/>
            <person name="Grivell L.A."/>
            <person name="Rieger M."/>
            <person name="Weichselgartner M."/>
            <person name="de Simone V."/>
            <person name="Obermaier B."/>
            <person name="Mache R."/>
            <person name="Mueller M."/>
            <person name="Kreis M."/>
            <person name="Delseny M."/>
            <person name="Puigdomenech P."/>
            <person name="Watson M."/>
            <person name="Schmidtheini T."/>
            <person name="Reichert B."/>
            <person name="Portetelle D."/>
            <person name="Perez-Alonso M."/>
            <person name="Boutry M."/>
            <person name="Bancroft I."/>
            <person name="Vos P."/>
            <person name="Hoheisel J."/>
            <person name="Zimmermann W."/>
            <person name="Wedler H."/>
            <person name="Ridley P."/>
            <person name="Langham S.-A."/>
            <person name="McCullagh B."/>
            <person name="Bilham L."/>
            <person name="Robben J."/>
            <person name="van der Schueren J."/>
            <person name="Grymonprez B."/>
            <person name="Chuang Y.-J."/>
            <person name="Vandenbussche F."/>
            <person name="Braeken M."/>
            <person name="Weltjens I."/>
            <person name="Voet M."/>
            <person name="Bastiaens I."/>
            <person name="Aert R."/>
            <person name="Defoor E."/>
            <person name="Weitzenegger T."/>
            <person name="Bothe G."/>
            <person name="Ramsperger U."/>
            <person name="Hilbert H."/>
            <person name="Braun M."/>
            <person name="Holzer E."/>
            <person name="Brandt A."/>
            <person name="Peters S."/>
            <person name="van Staveren M."/>
            <person name="Dirkse W."/>
            <person name="Mooijman P."/>
            <person name="Klein Lankhorst R."/>
            <person name="Rose M."/>
            <person name="Hauf J."/>
            <person name="Koetter P."/>
            <person name="Berneiser S."/>
            <person name="Hempel S."/>
            <person name="Feldpausch M."/>
            <person name="Lamberth S."/>
            <person name="Van den Daele H."/>
            <person name="De Keyser A."/>
            <person name="Buysshaert C."/>
            <person name="Gielen J."/>
            <person name="Villarroel R."/>
            <person name="De Clercq R."/>
            <person name="van Montagu M."/>
            <person name="Rogers J."/>
            <person name="Cronin A."/>
            <person name="Quail M.A."/>
            <person name="Bray-Allen S."/>
            <person name="Clark L."/>
            <person name="Doggett J."/>
            <person name="Hall S."/>
            <person name="Kay M."/>
            <person name="Lennard N."/>
            <person name="McLay K."/>
            <person name="Mayes R."/>
            <person name="Pettett A."/>
            <person name="Rajandream M.A."/>
            <person name="Lyne M."/>
            <person name="Benes V."/>
            <person name="Rechmann S."/>
            <person name="Borkova D."/>
            <person name="Bloecker H."/>
            <person name="Scharfe M."/>
            <person name="Grimm M."/>
            <person name="Loehnert T.-H."/>
            <person name="Dose S."/>
            <person name="de Haan M."/>
            <person name="Maarse A.C."/>
            <person name="Schaefer M."/>
            <person name="Mueller-Auer S."/>
            <person name="Gabel C."/>
            <person name="Fuchs M."/>
            <person name="Fartmann B."/>
            <person name="Granderath K."/>
            <person name="Dauner D."/>
            <person name="Herzl A."/>
            <person name="Neumann S."/>
            <person name="Argiriou A."/>
            <person name="Vitale D."/>
            <person name="Liguori R."/>
            <person name="Piravandi E."/>
            <person name="Massenet O."/>
            <person name="Quigley F."/>
            <person name="Clabauld G."/>
            <person name="Muendlein A."/>
            <person name="Felber R."/>
            <person name="Schnabl S."/>
            <person name="Hiller R."/>
            <person name="Schmidt W."/>
            <person name="Lecharny A."/>
            <person name="Aubourg S."/>
            <person name="Chefdor F."/>
            <person name="Cooke R."/>
            <person name="Berger C."/>
            <person name="Monfort A."/>
            <person name="Casacuberta E."/>
            <person name="Gibbons T."/>
            <person name="Weber N."/>
            <person name="Vandenbol M."/>
            <person name="Bargues M."/>
            <person name="Terol J."/>
            <person name="Torres A."/>
            <person name="Perez-Perez A."/>
            <person name="Purnelle B."/>
            <person name="Bent E."/>
            <person name="Johnson S."/>
            <person name="Tacon D."/>
            <person name="Jesse T."/>
            <person name="Heijnen L."/>
            <person name="Schwarz S."/>
            <person name="Scholler P."/>
            <person name="Heber S."/>
            <person name="Francs P."/>
            <person name="Bielke C."/>
            <person name="Frishman D."/>
            <person name="Haase D."/>
            <person name="Lemcke K."/>
            <person name="Mewes H.-W."/>
            <person name="Stocker S."/>
            <person name="Zaccaria P."/>
            <person name="Bevan M."/>
            <person name="Wilson R.K."/>
            <person name="de la Bastide M."/>
            <person name="Habermann K."/>
            <person name="Parnell L."/>
            <person name="Dedhia N."/>
            <person name="Gnoj L."/>
            <person name="Schutz K."/>
            <person name="Huang E."/>
            <person name="Spiegel L."/>
            <person name="Sekhon M."/>
            <person name="Murray J."/>
            <person name="Sheet P."/>
            <person name="Cordes M."/>
            <person name="Abu-Threideh J."/>
            <person name="Stoneking T."/>
            <person name="Kalicki J."/>
            <person name="Graves T."/>
            <person name="Harmon G."/>
            <person name="Edwards J."/>
            <person name="Latreille P."/>
            <person name="Courtney L."/>
            <person name="Cloud J."/>
            <person name="Abbott A."/>
            <person name="Scott K."/>
            <person name="Johnson D."/>
            <person name="Minx P."/>
            <person name="Bentley D."/>
            <person name="Fulton B."/>
            <person name="Miller N."/>
            <person name="Greco T."/>
            <person name="Kemp K."/>
            <person name="Kramer J."/>
            <person name="Fulton L."/>
            <person name="Mardis E."/>
            <person name="Dante M."/>
            <person name="Pepin K."/>
            <person name="Hillier L.W."/>
            <person name="Nelson J."/>
            <person name="Spieth J."/>
            <person name="Ryan E."/>
            <person name="Andrews S."/>
            <person name="Geisel C."/>
            <person name="Layman D."/>
            <person name="Du H."/>
            <person name="Ali J."/>
            <person name="Berghoff A."/>
            <person name="Jones K."/>
            <person name="Drone K."/>
            <person name="Cotton M."/>
            <person name="Joshu C."/>
            <person name="Antonoiu B."/>
            <person name="Zidanic M."/>
            <person name="Strong C."/>
            <person name="Sun H."/>
            <person name="Lamar B."/>
            <person name="Yordan C."/>
            <person name="Ma P."/>
            <person name="Zhong J."/>
            <person name="Preston R."/>
            <person name="Vil D."/>
            <person name="Shekher M."/>
            <person name="Matero A."/>
            <person name="Shah R."/>
            <person name="Swaby I.K."/>
            <person name="O'Shaughnessy A."/>
            <person name="Rodriguez M."/>
            <person name="Hoffman J."/>
            <person name="Till S."/>
            <person name="Granat S."/>
            <person name="Shohdy N."/>
            <person name="Hasegawa A."/>
            <person name="Hameed A."/>
            <person name="Lodhi M."/>
            <person name="Johnson A."/>
            <person name="Chen E."/>
            <person name="Marra M.A."/>
            <person name="Martienssen R."/>
            <person name="McCombie W.R."/>
        </authorList>
    </citation>
    <scope>NUCLEOTIDE SEQUENCE [LARGE SCALE GENOMIC DNA]</scope>
    <source>
        <strain>cv. Columbia</strain>
    </source>
</reference>
<reference key="3">
    <citation type="journal article" date="2017" name="Plant J.">
        <title>Araport11: a complete reannotation of the Arabidopsis thaliana reference genome.</title>
        <authorList>
            <person name="Cheng C.Y."/>
            <person name="Krishnakumar V."/>
            <person name="Chan A.P."/>
            <person name="Thibaud-Nissen F."/>
            <person name="Schobel S."/>
            <person name="Town C.D."/>
        </authorList>
    </citation>
    <scope>GENOME REANNOTATION</scope>
    <source>
        <strain>cv. Columbia</strain>
    </source>
</reference>
<reference key="4">
    <citation type="journal article" date="2008" name="Plant Cell">
        <title>Arabidopsis 10-formyl tetrahydrofolate deformylases are essential for photorespiration.</title>
        <authorList>
            <person name="Collakova E."/>
            <person name="Goyer A."/>
            <person name="Naponelli V."/>
            <person name="Krassovskaya I."/>
            <person name="Gregory J.F. III"/>
            <person name="Hanson A.D."/>
            <person name="Shachar-Hill Y."/>
        </authorList>
    </citation>
    <scope>FUNCTION</scope>
    <scope>CATALYTIC ACTIVITY</scope>
    <scope>DISRUPTION PHENOTYPE</scope>
    <scope>SUBCELLULAR LOCATION</scope>
    <scope>TISSUE SPECIFICITY</scope>
</reference>
<feature type="transit peptide" description="Mitochondrion" evidence="2">
    <location>
        <begin position="1"/>
        <end position="12"/>
    </location>
</feature>
<feature type="chain" id="PRO_0000424343" description="Formyltetrahydrofolate deformylase 2, mitochondrial">
    <location>
        <begin position="13"/>
        <end position="328"/>
    </location>
</feature>
<feature type="domain" description="ACT" evidence="3">
    <location>
        <begin position="46"/>
        <end position="129"/>
    </location>
</feature>
<feature type="active site" evidence="1">
    <location>
        <position position="272"/>
    </location>
</feature>
<feature type="sequence conflict" description="In Ref. 1; CAB10517 and 2; CAB78739." evidence="5" ref="1 2">
    <original>F</original>
    <variation>L</variation>
    <location>
        <position position="78"/>
    </location>
</feature>